<name>OPSC2_HEMSA</name>
<organism>
    <name type="scientific">Hemigrapsus sanguineus</name>
    <name type="common">Asian shore crab</name>
    <dbReference type="NCBI Taxonomy" id="40176"/>
    <lineage>
        <taxon>Eukaryota</taxon>
        <taxon>Metazoa</taxon>
        <taxon>Ecdysozoa</taxon>
        <taxon>Arthropoda</taxon>
        <taxon>Crustacea</taxon>
        <taxon>Multicrustacea</taxon>
        <taxon>Malacostraca</taxon>
        <taxon>Eumalacostraca</taxon>
        <taxon>Eucarida</taxon>
        <taxon>Decapoda</taxon>
        <taxon>Pleocyemata</taxon>
        <taxon>Brachyura</taxon>
        <taxon>Eubrachyura</taxon>
        <taxon>Grapsoidea</taxon>
        <taxon>Varunidae</taxon>
        <taxon>Hemigrapsus</taxon>
    </lineage>
</organism>
<keyword id="KW-0157">Chromophore</keyword>
<keyword id="KW-1015">Disulfide bond</keyword>
<keyword id="KW-0297">G-protein coupled receptor</keyword>
<keyword id="KW-0325">Glycoprotein</keyword>
<keyword id="KW-0472">Membrane</keyword>
<keyword id="KW-0597">Phosphoprotein</keyword>
<keyword id="KW-0600">Photoreceptor protein</keyword>
<keyword id="KW-0675">Receptor</keyword>
<keyword id="KW-0681">Retinal protein</keyword>
<keyword id="KW-0716">Sensory transduction</keyword>
<keyword id="KW-0807">Transducer</keyword>
<keyword id="KW-0812">Transmembrane</keyword>
<keyword id="KW-1133">Transmembrane helix</keyword>
<keyword id="KW-0844">Vision</keyword>
<reference key="1">
    <citation type="journal article" date="1996" name="J. Exp. Biol.">
        <title>Two opsins from the compound eye of the crab Hemigrapsus sanguineus.</title>
        <authorList>
            <person name="Sakamoto K."/>
            <person name="Hisatomi O."/>
            <person name="Tokunaga F."/>
            <person name="Eguchi E."/>
        </authorList>
    </citation>
    <scope>NUCLEOTIDE SEQUENCE [MRNA]</scope>
    <source>
        <tissue>Eye</tissue>
    </source>
</reference>
<protein>
    <recommendedName>
        <fullName>Compound eye opsin BCRH2</fullName>
    </recommendedName>
</protein>
<feature type="chain" id="PRO_0000197750" description="Compound eye opsin BCRH2">
    <location>
        <begin position="1"/>
        <end position="377"/>
    </location>
</feature>
<feature type="topological domain" description="Extracellular">
    <location>
        <begin position="1"/>
        <end position="53"/>
    </location>
</feature>
<feature type="transmembrane region" description="Helical; Name=1" evidence="2">
    <location>
        <begin position="54"/>
        <end position="78"/>
    </location>
</feature>
<feature type="topological domain" description="Cytoplasmic">
    <location>
        <begin position="79"/>
        <end position="90"/>
    </location>
</feature>
<feature type="transmembrane region" description="Helical; Name=2" evidence="2">
    <location>
        <begin position="91"/>
        <end position="115"/>
    </location>
</feature>
<feature type="topological domain" description="Extracellular">
    <location>
        <begin position="116"/>
        <end position="131"/>
    </location>
</feature>
<feature type="transmembrane region" description="Helical; Name=3" evidence="2">
    <location>
        <begin position="132"/>
        <end position="151"/>
    </location>
</feature>
<feature type="topological domain" description="Cytoplasmic">
    <location>
        <begin position="152"/>
        <end position="170"/>
    </location>
</feature>
<feature type="transmembrane region" description="Helical; Name=4" evidence="2">
    <location>
        <begin position="171"/>
        <end position="194"/>
    </location>
</feature>
<feature type="topological domain" description="Extracellular">
    <location>
        <begin position="195"/>
        <end position="218"/>
    </location>
</feature>
<feature type="transmembrane region" description="Helical; Name=5" evidence="2">
    <location>
        <begin position="219"/>
        <end position="246"/>
    </location>
</feature>
<feature type="topological domain" description="Cytoplasmic">
    <location>
        <begin position="247"/>
        <end position="281"/>
    </location>
</feature>
<feature type="transmembrane region" description="Helical; Name=6" evidence="2">
    <location>
        <begin position="282"/>
        <end position="305"/>
    </location>
</feature>
<feature type="topological domain" description="Extracellular">
    <location>
        <begin position="306"/>
        <end position="313"/>
    </location>
</feature>
<feature type="transmembrane region" description="Helical; Name=7" evidence="2">
    <location>
        <begin position="314"/>
        <end position="338"/>
    </location>
</feature>
<feature type="topological domain" description="Cytoplasmic">
    <location>
        <begin position="339"/>
        <end position="377"/>
    </location>
</feature>
<feature type="modified residue" description="N6-(retinylidene)lysine" evidence="1">
    <location>
        <position position="325"/>
    </location>
</feature>
<feature type="glycosylation site" description="N-linked (GlcNAc...) asparagine" evidence="2">
    <location>
        <position position="3"/>
    </location>
</feature>
<feature type="disulfide bond" evidence="3">
    <location>
        <begin position="128"/>
        <end position="205"/>
    </location>
</feature>
<accession>Q25158</accession>
<proteinExistence type="evidence at transcript level"/>
<dbReference type="EMBL" id="D50584">
    <property type="protein sequence ID" value="BAA09133.1"/>
    <property type="molecule type" value="mRNA"/>
</dbReference>
<dbReference type="SMR" id="Q25158"/>
<dbReference type="GO" id="GO:0016020">
    <property type="term" value="C:membrane"/>
    <property type="evidence" value="ECO:0007669"/>
    <property type="project" value="UniProtKB-SubCell"/>
</dbReference>
<dbReference type="GO" id="GO:0004930">
    <property type="term" value="F:G protein-coupled receptor activity"/>
    <property type="evidence" value="ECO:0007669"/>
    <property type="project" value="UniProtKB-KW"/>
</dbReference>
<dbReference type="GO" id="GO:0009881">
    <property type="term" value="F:photoreceptor activity"/>
    <property type="evidence" value="ECO:0007669"/>
    <property type="project" value="UniProtKB-KW"/>
</dbReference>
<dbReference type="GO" id="GO:0007602">
    <property type="term" value="P:phototransduction"/>
    <property type="evidence" value="ECO:0007669"/>
    <property type="project" value="UniProtKB-KW"/>
</dbReference>
<dbReference type="GO" id="GO:0007601">
    <property type="term" value="P:visual perception"/>
    <property type="evidence" value="ECO:0007669"/>
    <property type="project" value="UniProtKB-KW"/>
</dbReference>
<dbReference type="CDD" id="cd15079">
    <property type="entry name" value="7tmA_photoreceptors_insect"/>
    <property type="match status" value="1"/>
</dbReference>
<dbReference type="FunFam" id="1.20.1070.10:FF:000044">
    <property type="entry name" value="Opsin, ultraviolet-sensitive"/>
    <property type="match status" value="1"/>
</dbReference>
<dbReference type="Gene3D" id="1.20.1070.10">
    <property type="entry name" value="Rhodopsin 7-helix transmembrane proteins"/>
    <property type="match status" value="1"/>
</dbReference>
<dbReference type="InterPro" id="IPR050125">
    <property type="entry name" value="GPCR_opsins"/>
</dbReference>
<dbReference type="InterPro" id="IPR000276">
    <property type="entry name" value="GPCR_Rhodpsn"/>
</dbReference>
<dbReference type="InterPro" id="IPR017452">
    <property type="entry name" value="GPCR_Rhodpsn_7TM"/>
</dbReference>
<dbReference type="InterPro" id="IPR001760">
    <property type="entry name" value="Opsin"/>
</dbReference>
<dbReference type="InterPro" id="IPR027430">
    <property type="entry name" value="Retinal_BS"/>
</dbReference>
<dbReference type="PANTHER" id="PTHR24240">
    <property type="entry name" value="OPSIN"/>
    <property type="match status" value="1"/>
</dbReference>
<dbReference type="Pfam" id="PF00001">
    <property type="entry name" value="7tm_1"/>
    <property type="match status" value="1"/>
</dbReference>
<dbReference type="PRINTS" id="PR00237">
    <property type="entry name" value="GPCRRHODOPSN"/>
</dbReference>
<dbReference type="PRINTS" id="PR00238">
    <property type="entry name" value="OPSIN"/>
</dbReference>
<dbReference type="PRINTS" id="PR00577">
    <property type="entry name" value="OPSINRH3RH4"/>
</dbReference>
<dbReference type="SMART" id="SM01381">
    <property type="entry name" value="7TM_GPCR_Srsx"/>
    <property type="match status" value="1"/>
</dbReference>
<dbReference type="SUPFAM" id="SSF81321">
    <property type="entry name" value="Family A G protein-coupled receptor-like"/>
    <property type="match status" value="1"/>
</dbReference>
<dbReference type="PROSITE" id="PS00237">
    <property type="entry name" value="G_PROTEIN_RECEP_F1_1"/>
    <property type="match status" value="1"/>
</dbReference>
<dbReference type="PROSITE" id="PS50262">
    <property type="entry name" value="G_PROTEIN_RECEP_F1_2"/>
    <property type="match status" value="1"/>
</dbReference>
<dbReference type="PROSITE" id="PS00238">
    <property type="entry name" value="OPSIN"/>
    <property type="match status" value="1"/>
</dbReference>
<comment type="function">
    <text>Visual pigments are the light-absorbing molecules that mediate vision. They consist of an apoprotein, opsin, covalently linked to cis-retinal. This opsin produces visual pigments with maximal absorption in the blue-green region of the spectrum.</text>
</comment>
<comment type="subcellular location">
    <subcellularLocation>
        <location>Membrane</location>
        <topology>Multi-pass membrane protein</topology>
    </subcellularLocation>
</comment>
<comment type="tissue specificity">
    <text>Expressed in all of the seven retinular cells (R1-R7) forming the main rhabdom in each ommatidium.</text>
</comment>
<comment type="PTM">
    <text evidence="1">Phosphorylated on some or all of the serine and threonine residues present in the C-terminal region.</text>
</comment>
<comment type="similarity">
    <text evidence="3">Belongs to the G-protein coupled receptor 1 family. Opsin subfamily.</text>
</comment>
<evidence type="ECO:0000250" key="1"/>
<evidence type="ECO:0000255" key="2"/>
<evidence type="ECO:0000255" key="3">
    <source>
        <dbReference type="PROSITE-ProRule" id="PRU00521"/>
    </source>
</evidence>
<sequence>MTNATGPQMAYYGAASMDFGYPEGVSIVDFVRPEIKPYVHQHWYNYPPVNPMWHYLLGVIYLFLGTVSIFGNGLVIYLFNKSAALRTPANILVVNLALSDLIMLTTNVPFFTYNCFSGGVWMFSPQYCEIYACLGAITGVCSIWLLCMISFDRYNIICNGFNGPKLTTGKAVVFALISWVIAIGCALPPFFGWGNYILEGILDSCSYDYLTQDFNTFSYNIFIFVFDYFLPAAIIVFSYVFIVKAIFAHEAAMRAQAKKMNVSTLRSNEADAQRAEIRIAKTALVNVSLWFICWTPYALISLKGVMGDTSGITPLVSTLPALLAKSCSCYNPFVYAISHPKYRLAITQHLPWFCVHETETKSNDDSQSNSTVAQDKA</sequence>